<comment type="function">
    <text evidence="1">One of the primary rRNA binding proteins, it binds directly to 16S rRNA where it helps nucleate assembly of the platform of the 30S subunit by binding and bridging several RNA helices of the 16S rRNA.</text>
</comment>
<comment type="function">
    <text evidence="1">Forms an intersubunit bridge (bridge B4) with the 23S rRNA of the 50S subunit in the ribosome.</text>
</comment>
<comment type="subunit">
    <text evidence="1">Part of the 30S ribosomal subunit. Forms a bridge to the 50S subunit in the 70S ribosome, contacting the 23S rRNA.</text>
</comment>
<comment type="similarity">
    <text evidence="1">Belongs to the universal ribosomal protein uS15 family.</text>
</comment>
<evidence type="ECO:0000255" key="1">
    <source>
        <dbReference type="HAMAP-Rule" id="MF_01343"/>
    </source>
</evidence>
<evidence type="ECO:0000305" key="2"/>
<dbReference type="EMBL" id="AE000783">
    <property type="protein sequence ID" value="AAC67150.1"/>
    <property type="molecule type" value="Genomic_DNA"/>
</dbReference>
<dbReference type="PIR" id="C70200">
    <property type="entry name" value="C70200"/>
</dbReference>
<dbReference type="RefSeq" id="NP_212938.1">
    <property type="nucleotide sequence ID" value="NC_001318.1"/>
</dbReference>
<dbReference type="RefSeq" id="WP_002557393.1">
    <property type="nucleotide sequence ID" value="NC_001318.1"/>
</dbReference>
<dbReference type="PDB" id="8FMW">
    <property type="method" value="EM"/>
    <property type="resolution" value="2.86 A"/>
    <property type="chains" value="O=1-88"/>
</dbReference>
<dbReference type="PDBsum" id="8FMW"/>
<dbReference type="EMDB" id="EMD-29298"/>
<dbReference type="SMR" id="O51744"/>
<dbReference type="STRING" id="224326.BB_0804"/>
<dbReference type="PaxDb" id="224326-BB_0804"/>
<dbReference type="EnsemblBacteria" id="AAC67150">
    <property type="protein sequence ID" value="AAC67150"/>
    <property type="gene ID" value="BB_0804"/>
</dbReference>
<dbReference type="GeneID" id="56567383"/>
<dbReference type="KEGG" id="bbu:BB_0804"/>
<dbReference type="PATRIC" id="fig|224326.49.peg.1196"/>
<dbReference type="HOGENOM" id="CLU_148518_0_0_12"/>
<dbReference type="OrthoDB" id="9799262at2"/>
<dbReference type="Proteomes" id="UP000001807">
    <property type="component" value="Chromosome"/>
</dbReference>
<dbReference type="GO" id="GO:0022627">
    <property type="term" value="C:cytosolic small ribosomal subunit"/>
    <property type="evidence" value="ECO:0007669"/>
    <property type="project" value="TreeGrafter"/>
</dbReference>
<dbReference type="GO" id="GO:0019843">
    <property type="term" value="F:rRNA binding"/>
    <property type="evidence" value="ECO:0007669"/>
    <property type="project" value="UniProtKB-UniRule"/>
</dbReference>
<dbReference type="GO" id="GO:0003735">
    <property type="term" value="F:structural constituent of ribosome"/>
    <property type="evidence" value="ECO:0007669"/>
    <property type="project" value="InterPro"/>
</dbReference>
<dbReference type="GO" id="GO:0006412">
    <property type="term" value="P:translation"/>
    <property type="evidence" value="ECO:0007669"/>
    <property type="project" value="UniProtKB-UniRule"/>
</dbReference>
<dbReference type="CDD" id="cd00353">
    <property type="entry name" value="Ribosomal_S15p_S13e"/>
    <property type="match status" value="1"/>
</dbReference>
<dbReference type="FunFam" id="1.10.287.10:FF:000002">
    <property type="entry name" value="30S ribosomal protein S15"/>
    <property type="match status" value="1"/>
</dbReference>
<dbReference type="Gene3D" id="6.10.250.3130">
    <property type="match status" value="1"/>
</dbReference>
<dbReference type="Gene3D" id="1.10.287.10">
    <property type="entry name" value="S15/NS1, RNA-binding"/>
    <property type="match status" value="1"/>
</dbReference>
<dbReference type="HAMAP" id="MF_01343_B">
    <property type="entry name" value="Ribosomal_uS15_B"/>
    <property type="match status" value="1"/>
</dbReference>
<dbReference type="InterPro" id="IPR000589">
    <property type="entry name" value="Ribosomal_uS15"/>
</dbReference>
<dbReference type="InterPro" id="IPR005290">
    <property type="entry name" value="Ribosomal_uS15_bac-type"/>
</dbReference>
<dbReference type="InterPro" id="IPR009068">
    <property type="entry name" value="uS15_NS1_RNA-bd_sf"/>
</dbReference>
<dbReference type="NCBIfam" id="TIGR00952">
    <property type="entry name" value="S15_bact"/>
    <property type="match status" value="1"/>
</dbReference>
<dbReference type="PANTHER" id="PTHR23321">
    <property type="entry name" value="RIBOSOMAL PROTEIN S15, BACTERIAL AND ORGANELLAR"/>
    <property type="match status" value="1"/>
</dbReference>
<dbReference type="PANTHER" id="PTHR23321:SF26">
    <property type="entry name" value="SMALL RIBOSOMAL SUBUNIT PROTEIN US15M"/>
    <property type="match status" value="1"/>
</dbReference>
<dbReference type="Pfam" id="PF00312">
    <property type="entry name" value="Ribosomal_S15"/>
    <property type="match status" value="1"/>
</dbReference>
<dbReference type="SMART" id="SM01387">
    <property type="entry name" value="Ribosomal_S15"/>
    <property type="match status" value="1"/>
</dbReference>
<dbReference type="SUPFAM" id="SSF47060">
    <property type="entry name" value="S15/NS1 RNA-binding domain"/>
    <property type="match status" value="1"/>
</dbReference>
<dbReference type="PROSITE" id="PS00362">
    <property type="entry name" value="RIBOSOMAL_S15"/>
    <property type="match status" value="1"/>
</dbReference>
<feature type="chain" id="PRO_0000115395" description="Small ribosomal subunit protein uS15">
    <location>
        <begin position="1"/>
        <end position="88"/>
    </location>
</feature>
<sequence>MIDKKQKQKIVSEFGKNESDTGSVGVQIALITGRIKYLTEHLKINKKDHSSKRGLLKLVGQRRSLLRYYQKKDLEAYRMLISKLGLRK</sequence>
<reference key="1">
    <citation type="journal article" date="1997" name="Nature">
        <title>Genomic sequence of a Lyme disease spirochaete, Borrelia burgdorferi.</title>
        <authorList>
            <person name="Fraser C.M."/>
            <person name="Casjens S."/>
            <person name="Huang W.M."/>
            <person name="Sutton G.G."/>
            <person name="Clayton R.A."/>
            <person name="Lathigra R."/>
            <person name="White O."/>
            <person name="Ketchum K.A."/>
            <person name="Dodson R.J."/>
            <person name="Hickey E.K."/>
            <person name="Gwinn M.L."/>
            <person name="Dougherty B.A."/>
            <person name="Tomb J.-F."/>
            <person name="Fleischmann R.D."/>
            <person name="Richardson D.L."/>
            <person name="Peterson J.D."/>
            <person name="Kerlavage A.R."/>
            <person name="Quackenbush J."/>
            <person name="Salzberg S.L."/>
            <person name="Hanson M."/>
            <person name="van Vugt R."/>
            <person name="Palmer N."/>
            <person name="Adams M.D."/>
            <person name="Gocayne J.D."/>
            <person name="Weidman J.F."/>
            <person name="Utterback T.R."/>
            <person name="Watthey L."/>
            <person name="McDonald L.A."/>
            <person name="Artiach P."/>
            <person name="Bowman C."/>
            <person name="Garland S.A."/>
            <person name="Fujii C."/>
            <person name="Cotton M.D."/>
            <person name="Horst K."/>
            <person name="Roberts K.M."/>
            <person name="Hatch B."/>
            <person name="Smith H.O."/>
            <person name="Venter J.C."/>
        </authorList>
    </citation>
    <scope>NUCLEOTIDE SEQUENCE [LARGE SCALE GENOMIC DNA]</scope>
    <source>
        <strain>ATCC 35210 / DSM 4680 / CIP 102532 / B31</strain>
    </source>
</reference>
<name>RS15_BORBU</name>
<organism>
    <name type="scientific">Borreliella burgdorferi (strain ATCC 35210 / DSM 4680 / CIP 102532 / B31)</name>
    <name type="common">Borrelia burgdorferi</name>
    <dbReference type="NCBI Taxonomy" id="224326"/>
    <lineage>
        <taxon>Bacteria</taxon>
        <taxon>Pseudomonadati</taxon>
        <taxon>Spirochaetota</taxon>
        <taxon>Spirochaetia</taxon>
        <taxon>Spirochaetales</taxon>
        <taxon>Borreliaceae</taxon>
        <taxon>Borreliella</taxon>
    </lineage>
</organism>
<protein>
    <recommendedName>
        <fullName evidence="1">Small ribosomal subunit protein uS15</fullName>
    </recommendedName>
    <alternativeName>
        <fullName evidence="2">30S ribosomal protein S15</fullName>
    </alternativeName>
</protein>
<gene>
    <name evidence="1" type="primary">rpsO</name>
    <name type="ordered locus">BB_0804</name>
</gene>
<accession>O51744</accession>
<keyword id="KW-0002">3D-structure</keyword>
<keyword id="KW-1185">Reference proteome</keyword>
<keyword id="KW-0687">Ribonucleoprotein</keyword>
<keyword id="KW-0689">Ribosomal protein</keyword>
<keyword id="KW-0694">RNA-binding</keyword>
<keyword id="KW-0699">rRNA-binding</keyword>
<proteinExistence type="evidence at protein level"/>